<keyword id="KW-0378">Hydrolase</keyword>
<keyword id="KW-0479">Metal-binding</keyword>
<keyword id="KW-0862">Zinc</keyword>
<name>MTAD_NITV9</name>
<proteinExistence type="inferred from homology"/>
<feature type="chain" id="PRO_1000140349" description="5-methylthioadenosine/S-adenosylhomocysteine deaminase">
    <location>
        <begin position="1"/>
        <end position="440"/>
    </location>
</feature>
<feature type="binding site" evidence="1">
    <location>
        <position position="70"/>
    </location>
    <ligand>
        <name>Zn(2+)</name>
        <dbReference type="ChEBI" id="CHEBI:29105"/>
    </ligand>
</feature>
<feature type="binding site" evidence="1">
    <location>
        <position position="72"/>
    </location>
    <ligand>
        <name>Zn(2+)</name>
        <dbReference type="ChEBI" id="CHEBI:29105"/>
    </ligand>
</feature>
<feature type="binding site" evidence="1">
    <location>
        <position position="99"/>
    </location>
    <ligand>
        <name>substrate</name>
    </ligand>
</feature>
<feature type="binding site" evidence="1">
    <location>
        <position position="191"/>
    </location>
    <ligand>
        <name>substrate</name>
    </ligand>
</feature>
<feature type="binding site" evidence="1">
    <location>
        <position position="218"/>
    </location>
    <ligand>
        <name>Zn(2+)</name>
        <dbReference type="ChEBI" id="CHEBI:29105"/>
    </ligand>
</feature>
<feature type="binding site" evidence="1">
    <location>
        <position position="221"/>
    </location>
    <ligand>
        <name>substrate</name>
    </ligand>
</feature>
<feature type="binding site" evidence="1">
    <location>
        <position position="306"/>
    </location>
    <ligand>
        <name>substrate</name>
    </ligand>
</feature>
<feature type="binding site" evidence="1">
    <location>
        <position position="306"/>
    </location>
    <ligand>
        <name>Zn(2+)</name>
        <dbReference type="ChEBI" id="CHEBI:29105"/>
    </ligand>
</feature>
<reference key="1">
    <citation type="submission" date="2008-10" db="EMBL/GenBank/DDBJ databases">
        <title>Complete sequence of Desulfovibrio vulgaris str. 'Miyazaki F'.</title>
        <authorList>
            <person name="Lucas S."/>
            <person name="Copeland A."/>
            <person name="Lapidus A."/>
            <person name="Glavina del Rio T."/>
            <person name="Dalin E."/>
            <person name="Tice H."/>
            <person name="Bruce D."/>
            <person name="Goodwin L."/>
            <person name="Pitluck S."/>
            <person name="Sims D."/>
            <person name="Brettin T."/>
            <person name="Detter J.C."/>
            <person name="Han C."/>
            <person name="Larimer F."/>
            <person name="Land M."/>
            <person name="Hauser L."/>
            <person name="Kyrpides N."/>
            <person name="Mikhailova N."/>
            <person name="Hazen T.C."/>
            <person name="Richardson P."/>
        </authorList>
    </citation>
    <scope>NUCLEOTIDE SEQUENCE [LARGE SCALE GENOMIC DNA]</scope>
    <source>
        <strain>DSM 19637 / Miyazaki F</strain>
    </source>
</reference>
<accession>B8DKS6</accession>
<sequence length="440" mass="47191">MTRPCDILIQAACIVTQDAMRTVVEDGALAVADGTVLAVGPREAVTAAHAPARLLDLGNALVMPGLVNAHTHAAMTFLRGVADDLPLMDWLTQHIFPVEKHLTPDIVEAGALLGCAEMLRTGTTAFNDMYLIQDATYRAVDTAGLRCLGGEGIFGFPSPAYPDADAGLDLVRRLHETWRHNPRIRQCVTPHAVYTTSPELLQRCQALAEELDLPLHIHLAETTTETAQCQQMFGQRPVPYCHGLGLLTPRATVAHAVDLTDDEMDLLASTGAAVAHNPESNMKLASGAAPVPQMLARGIAVGIGTDGAASNNSLNMFTEMTSCAMLHKLRCMDPTCAPAQTVLDMATLGGAAALHWPGLGQLAPGCPADLTVLDLSAPNLQPMYNPASHLVYAATGHEVRLTMVAGEVLYQDGRFTRFDYPALMAQMRDVRRWVLDKLGR</sequence>
<protein>
    <recommendedName>
        <fullName evidence="1">5-methylthioadenosine/S-adenosylhomocysteine deaminase</fullName>
        <shortName evidence="1">MTA/SAH deaminase</shortName>
        <ecNumber evidence="1">3.5.4.28</ecNumber>
        <ecNumber evidence="1">3.5.4.31</ecNumber>
    </recommendedName>
</protein>
<comment type="function">
    <text evidence="1">Catalyzes the deamination of 5-methylthioadenosine and S-adenosyl-L-homocysteine into 5-methylthioinosine and S-inosyl-L-homocysteine, respectively. Is also able to deaminate adenosine.</text>
</comment>
<comment type="catalytic activity">
    <reaction evidence="1">
        <text>S-adenosyl-L-homocysteine + H2O + H(+) = S-inosyl-L-homocysteine + NH4(+)</text>
        <dbReference type="Rhea" id="RHEA:20716"/>
        <dbReference type="ChEBI" id="CHEBI:15377"/>
        <dbReference type="ChEBI" id="CHEBI:15378"/>
        <dbReference type="ChEBI" id="CHEBI:28938"/>
        <dbReference type="ChEBI" id="CHEBI:57856"/>
        <dbReference type="ChEBI" id="CHEBI:57985"/>
        <dbReference type="EC" id="3.5.4.28"/>
    </reaction>
</comment>
<comment type="catalytic activity">
    <reaction evidence="1">
        <text>S-methyl-5'-thioadenosine + H2O + H(+) = S-methyl-5'-thioinosine + NH4(+)</text>
        <dbReference type="Rhea" id="RHEA:25025"/>
        <dbReference type="ChEBI" id="CHEBI:15377"/>
        <dbReference type="ChEBI" id="CHEBI:15378"/>
        <dbReference type="ChEBI" id="CHEBI:17509"/>
        <dbReference type="ChEBI" id="CHEBI:28938"/>
        <dbReference type="ChEBI" id="CHEBI:48595"/>
        <dbReference type="EC" id="3.5.4.31"/>
    </reaction>
</comment>
<comment type="cofactor">
    <cofactor evidence="1">
        <name>Zn(2+)</name>
        <dbReference type="ChEBI" id="CHEBI:29105"/>
    </cofactor>
    <text evidence="1">Binds 1 zinc ion per subunit.</text>
</comment>
<comment type="similarity">
    <text evidence="1">Belongs to the metallo-dependent hydrolases superfamily. MTA/SAH deaminase family.</text>
</comment>
<organism>
    <name type="scientific">Nitratidesulfovibrio vulgaris (strain DSM 19637 / Miyazaki F)</name>
    <name type="common">Desulfovibrio vulgaris</name>
    <dbReference type="NCBI Taxonomy" id="883"/>
    <lineage>
        <taxon>Bacteria</taxon>
        <taxon>Pseudomonadati</taxon>
        <taxon>Thermodesulfobacteriota</taxon>
        <taxon>Desulfovibrionia</taxon>
        <taxon>Desulfovibrionales</taxon>
        <taxon>Desulfovibrionaceae</taxon>
        <taxon>Nitratidesulfovibrio</taxon>
    </lineage>
</organism>
<dbReference type="EC" id="3.5.4.28" evidence="1"/>
<dbReference type="EC" id="3.5.4.31" evidence="1"/>
<dbReference type="EMBL" id="CP001197">
    <property type="protein sequence ID" value="ACL07505.1"/>
    <property type="molecule type" value="Genomic_DNA"/>
</dbReference>
<dbReference type="SMR" id="B8DKS6"/>
<dbReference type="STRING" id="883.DvMF_0548"/>
<dbReference type="KEGG" id="dvm:DvMF_0548"/>
<dbReference type="eggNOG" id="COG0402">
    <property type="taxonomic scope" value="Bacteria"/>
</dbReference>
<dbReference type="HOGENOM" id="CLU_012358_2_1_7"/>
<dbReference type="OrthoDB" id="9807210at2"/>
<dbReference type="GO" id="GO:0090614">
    <property type="term" value="F:5'-methylthioadenosine deaminase activity"/>
    <property type="evidence" value="ECO:0007669"/>
    <property type="project" value="UniProtKB-UniRule"/>
</dbReference>
<dbReference type="GO" id="GO:0046872">
    <property type="term" value="F:metal ion binding"/>
    <property type="evidence" value="ECO:0007669"/>
    <property type="project" value="UniProtKB-KW"/>
</dbReference>
<dbReference type="GO" id="GO:0050270">
    <property type="term" value="F:S-adenosylhomocysteine deaminase activity"/>
    <property type="evidence" value="ECO:0007669"/>
    <property type="project" value="UniProtKB-UniRule"/>
</dbReference>
<dbReference type="CDD" id="cd01298">
    <property type="entry name" value="ATZ_TRZ_like"/>
    <property type="match status" value="1"/>
</dbReference>
<dbReference type="FunFam" id="3.20.20.140:FF:000014">
    <property type="entry name" value="5-methylthioadenosine/S-adenosylhomocysteine deaminase"/>
    <property type="match status" value="1"/>
</dbReference>
<dbReference type="Gene3D" id="3.20.20.140">
    <property type="entry name" value="Metal-dependent hydrolases"/>
    <property type="match status" value="1"/>
</dbReference>
<dbReference type="Gene3D" id="2.30.40.10">
    <property type="entry name" value="Urease, subunit C, domain 1"/>
    <property type="match status" value="1"/>
</dbReference>
<dbReference type="HAMAP" id="MF_01281">
    <property type="entry name" value="MTA_SAH_deamin"/>
    <property type="match status" value="1"/>
</dbReference>
<dbReference type="InterPro" id="IPR006680">
    <property type="entry name" value="Amidohydro-rel"/>
</dbReference>
<dbReference type="InterPro" id="IPR023512">
    <property type="entry name" value="Deaminase_MtaD/DadD"/>
</dbReference>
<dbReference type="InterPro" id="IPR011059">
    <property type="entry name" value="Metal-dep_hydrolase_composite"/>
</dbReference>
<dbReference type="InterPro" id="IPR032466">
    <property type="entry name" value="Metal_Hydrolase"/>
</dbReference>
<dbReference type="InterPro" id="IPR050287">
    <property type="entry name" value="MTA/SAH_deaminase"/>
</dbReference>
<dbReference type="PANTHER" id="PTHR43794:SF11">
    <property type="entry name" value="AMIDOHYDROLASE-RELATED DOMAIN-CONTAINING PROTEIN"/>
    <property type="match status" value="1"/>
</dbReference>
<dbReference type="PANTHER" id="PTHR43794">
    <property type="entry name" value="AMINOHYDROLASE SSNA-RELATED"/>
    <property type="match status" value="1"/>
</dbReference>
<dbReference type="Pfam" id="PF01979">
    <property type="entry name" value="Amidohydro_1"/>
    <property type="match status" value="1"/>
</dbReference>
<dbReference type="SUPFAM" id="SSF51338">
    <property type="entry name" value="Composite domain of metallo-dependent hydrolases"/>
    <property type="match status" value="1"/>
</dbReference>
<dbReference type="SUPFAM" id="SSF51556">
    <property type="entry name" value="Metallo-dependent hydrolases"/>
    <property type="match status" value="1"/>
</dbReference>
<gene>
    <name evidence="1" type="primary">mtaD</name>
    <name type="ordered locus">DvMF_0548</name>
</gene>
<evidence type="ECO:0000255" key="1">
    <source>
        <dbReference type="HAMAP-Rule" id="MF_01281"/>
    </source>
</evidence>